<proteinExistence type="inferred from homology"/>
<dbReference type="EC" id="2.3.1.180" evidence="1"/>
<dbReference type="EMBL" id="CP000725">
    <property type="protein sequence ID" value="ABV10797.1"/>
    <property type="molecule type" value="Genomic_DNA"/>
</dbReference>
<dbReference type="RefSeq" id="WP_012130751.1">
    <property type="nucleotide sequence ID" value="NC_009785.1"/>
</dbReference>
<dbReference type="SMR" id="A8AYW5"/>
<dbReference type="STRING" id="467705.SGO_1698"/>
<dbReference type="KEGG" id="sgo:SGO_1698"/>
<dbReference type="eggNOG" id="COG0332">
    <property type="taxonomic scope" value="Bacteria"/>
</dbReference>
<dbReference type="HOGENOM" id="CLU_039592_4_1_9"/>
<dbReference type="BRENDA" id="2.3.1.180">
    <property type="organism ID" value="5934"/>
</dbReference>
<dbReference type="UniPathway" id="UPA00094"/>
<dbReference type="Proteomes" id="UP000001131">
    <property type="component" value="Chromosome"/>
</dbReference>
<dbReference type="GO" id="GO:0005737">
    <property type="term" value="C:cytoplasm"/>
    <property type="evidence" value="ECO:0007669"/>
    <property type="project" value="UniProtKB-SubCell"/>
</dbReference>
<dbReference type="GO" id="GO:0004315">
    <property type="term" value="F:3-oxoacyl-[acyl-carrier-protein] synthase activity"/>
    <property type="evidence" value="ECO:0007669"/>
    <property type="project" value="InterPro"/>
</dbReference>
<dbReference type="GO" id="GO:0033818">
    <property type="term" value="F:beta-ketoacyl-acyl-carrier-protein synthase III activity"/>
    <property type="evidence" value="ECO:0007669"/>
    <property type="project" value="UniProtKB-UniRule"/>
</dbReference>
<dbReference type="GO" id="GO:0006633">
    <property type="term" value="P:fatty acid biosynthetic process"/>
    <property type="evidence" value="ECO:0007669"/>
    <property type="project" value="UniProtKB-UniRule"/>
</dbReference>
<dbReference type="CDD" id="cd00830">
    <property type="entry name" value="KAS_III"/>
    <property type="match status" value="1"/>
</dbReference>
<dbReference type="FunFam" id="3.40.47.10:FF:000004">
    <property type="entry name" value="3-oxoacyl-[acyl-carrier-protein] synthase 3"/>
    <property type="match status" value="1"/>
</dbReference>
<dbReference type="Gene3D" id="3.40.47.10">
    <property type="match status" value="1"/>
</dbReference>
<dbReference type="HAMAP" id="MF_01815">
    <property type="entry name" value="FabH"/>
    <property type="match status" value="1"/>
</dbReference>
<dbReference type="InterPro" id="IPR013747">
    <property type="entry name" value="ACP_syn_III_C"/>
</dbReference>
<dbReference type="InterPro" id="IPR013751">
    <property type="entry name" value="ACP_syn_III_N"/>
</dbReference>
<dbReference type="InterPro" id="IPR004655">
    <property type="entry name" value="FabH"/>
</dbReference>
<dbReference type="InterPro" id="IPR016039">
    <property type="entry name" value="Thiolase-like"/>
</dbReference>
<dbReference type="NCBIfam" id="TIGR00747">
    <property type="entry name" value="fabH"/>
    <property type="match status" value="1"/>
</dbReference>
<dbReference type="NCBIfam" id="NF006829">
    <property type="entry name" value="PRK09352.1"/>
    <property type="match status" value="1"/>
</dbReference>
<dbReference type="PANTHER" id="PTHR43091">
    <property type="entry name" value="3-OXOACYL-[ACYL-CARRIER-PROTEIN] SYNTHASE"/>
    <property type="match status" value="1"/>
</dbReference>
<dbReference type="PANTHER" id="PTHR43091:SF1">
    <property type="entry name" value="BETA-KETOACYL-[ACYL-CARRIER-PROTEIN] SYNTHASE III, CHLOROPLASTIC"/>
    <property type="match status" value="1"/>
</dbReference>
<dbReference type="Pfam" id="PF08545">
    <property type="entry name" value="ACP_syn_III"/>
    <property type="match status" value="1"/>
</dbReference>
<dbReference type="Pfam" id="PF08541">
    <property type="entry name" value="ACP_syn_III_C"/>
    <property type="match status" value="1"/>
</dbReference>
<dbReference type="SUPFAM" id="SSF53901">
    <property type="entry name" value="Thiolase-like"/>
    <property type="match status" value="1"/>
</dbReference>
<comment type="function">
    <text evidence="1">Catalyzes the condensation reaction of fatty acid synthesis by the addition to an acyl acceptor of two carbons from malonyl-ACP. Catalyzes the first condensation reaction which initiates fatty acid synthesis and may therefore play a role in governing the total rate of fatty acid production. Possesses both acetoacetyl-ACP synthase and acetyl transacylase activities. Its substrate specificity determines the biosynthesis of branched-chain and/or straight-chain of fatty acids.</text>
</comment>
<comment type="catalytic activity">
    <reaction evidence="1">
        <text>malonyl-[ACP] + acetyl-CoA + H(+) = 3-oxobutanoyl-[ACP] + CO2 + CoA</text>
        <dbReference type="Rhea" id="RHEA:12080"/>
        <dbReference type="Rhea" id="RHEA-COMP:9623"/>
        <dbReference type="Rhea" id="RHEA-COMP:9625"/>
        <dbReference type="ChEBI" id="CHEBI:15378"/>
        <dbReference type="ChEBI" id="CHEBI:16526"/>
        <dbReference type="ChEBI" id="CHEBI:57287"/>
        <dbReference type="ChEBI" id="CHEBI:57288"/>
        <dbReference type="ChEBI" id="CHEBI:78449"/>
        <dbReference type="ChEBI" id="CHEBI:78450"/>
        <dbReference type="EC" id="2.3.1.180"/>
    </reaction>
</comment>
<comment type="pathway">
    <text evidence="1">Lipid metabolism; fatty acid biosynthesis.</text>
</comment>
<comment type="subunit">
    <text evidence="1">Homodimer.</text>
</comment>
<comment type="subcellular location">
    <subcellularLocation>
        <location evidence="1">Cytoplasm</location>
    </subcellularLocation>
</comment>
<comment type="domain">
    <text evidence="1">The last Arg residue of the ACP-binding site is essential for the weak association between ACP/AcpP and FabH.</text>
</comment>
<comment type="similarity">
    <text evidence="1">Belongs to the thiolase-like superfamily. FabH family.</text>
</comment>
<gene>
    <name evidence="1" type="primary">fabH</name>
    <name type="ordered locus">SGO_1698</name>
</gene>
<keyword id="KW-0012">Acyltransferase</keyword>
<keyword id="KW-0963">Cytoplasm</keyword>
<keyword id="KW-0275">Fatty acid biosynthesis</keyword>
<keyword id="KW-0276">Fatty acid metabolism</keyword>
<keyword id="KW-0444">Lipid biosynthesis</keyword>
<keyword id="KW-0443">Lipid metabolism</keyword>
<keyword id="KW-0511">Multifunctional enzyme</keyword>
<keyword id="KW-1185">Reference proteome</keyword>
<keyword id="KW-0808">Transferase</keyword>
<organism>
    <name type="scientific">Streptococcus gordonii (strain Challis / ATCC 35105 / BCRC 15272 / CH1 / DL1 / V288)</name>
    <dbReference type="NCBI Taxonomy" id="467705"/>
    <lineage>
        <taxon>Bacteria</taxon>
        <taxon>Bacillati</taxon>
        <taxon>Bacillota</taxon>
        <taxon>Bacilli</taxon>
        <taxon>Lactobacillales</taxon>
        <taxon>Streptococcaceae</taxon>
        <taxon>Streptococcus</taxon>
    </lineage>
</organism>
<sequence length="324" mass="34987">MKFAKISQVAHYAPEQVVTNDDLAQIMDTSDEWISSRTGIKKRHISHHESTSDLATRVALDLLKKSEISAQDLDFIIVATITPDSLMPSTAARVQANIGAKKAFAYDLVAACSGFVFALSTAEKLISSGAYQKGLVIGSETLSKVVDWSDRGTAVLFGDGAGGVLLESTSDQHFLAEIQKTDGSRGESLTSCLMGLQSPFAQTEDDEKYLTMDGRAIFDFAIRDVAQSIKDTIEASPLEVDEIDYFLLHQANDRILNKIAKKLSVSRDKIPANMMEYGNTSAASIPILLSECVEQGLVKLDGSQKILLSGFGGGLTWGTLIVTI</sequence>
<feature type="chain" id="PRO_1000088327" description="Beta-ketoacyl-[acyl-carrier-protein] synthase III">
    <location>
        <begin position="1"/>
        <end position="324"/>
    </location>
</feature>
<feature type="region of interest" description="ACP-binding" evidence="1">
    <location>
        <begin position="250"/>
        <end position="254"/>
    </location>
</feature>
<feature type="active site" evidence="1">
    <location>
        <position position="112"/>
    </location>
</feature>
<feature type="active site" evidence="1">
    <location>
        <position position="249"/>
    </location>
</feature>
<feature type="active site" evidence="1">
    <location>
        <position position="279"/>
    </location>
</feature>
<name>FABH_STRGC</name>
<reference key="1">
    <citation type="journal article" date="2007" name="J. Bacteriol.">
        <title>Genome-wide transcriptional changes in Streptococcus gordonii in response to competence signaling peptide.</title>
        <authorList>
            <person name="Vickerman M.M."/>
            <person name="Iobst S."/>
            <person name="Jesionowski A.M."/>
            <person name="Gill S.R."/>
        </authorList>
    </citation>
    <scope>NUCLEOTIDE SEQUENCE [LARGE SCALE GENOMIC DNA]</scope>
    <source>
        <strain>Challis / ATCC 35105 / BCRC 15272 / CH1 / DL1 / V288</strain>
    </source>
</reference>
<accession>A8AYW5</accession>
<protein>
    <recommendedName>
        <fullName evidence="1">Beta-ketoacyl-[acyl-carrier-protein] synthase III</fullName>
        <shortName evidence="1">Beta-ketoacyl-ACP synthase III</shortName>
        <shortName evidence="1">KAS III</shortName>
        <ecNumber evidence="1">2.3.1.180</ecNumber>
    </recommendedName>
    <alternativeName>
        <fullName evidence="1">3-oxoacyl-[acyl-carrier-protein] synthase 3</fullName>
    </alternativeName>
    <alternativeName>
        <fullName evidence="1">3-oxoacyl-[acyl-carrier-protein] synthase III</fullName>
    </alternativeName>
</protein>
<evidence type="ECO:0000255" key="1">
    <source>
        <dbReference type="HAMAP-Rule" id="MF_01815"/>
    </source>
</evidence>